<accession>Q9HJT0</accession>
<name>DPHB_THEAC</name>
<gene>
    <name evidence="1" type="primary">dphB</name>
    <name type="ordered locus">Ta0883</name>
</gene>
<reference key="1">
    <citation type="journal article" date="2000" name="Nature">
        <title>The genome sequence of the thermoacidophilic scavenger Thermoplasma acidophilum.</title>
        <authorList>
            <person name="Ruepp A."/>
            <person name="Graml W."/>
            <person name="Santos-Martinez M.-L."/>
            <person name="Koretke K.K."/>
            <person name="Volker C."/>
            <person name="Mewes H.-W."/>
            <person name="Frishman D."/>
            <person name="Stocker S."/>
            <person name="Lupas A.N."/>
            <person name="Baumeister W."/>
        </authorList>
    </citation>
    <scope>NUCLEOTIDE SEQUENCE [LARGE SCALE GENOMIC DNA]</scope>
    <source>
        <strain>ATCC 25905 / DSM 1728 / JCM 9062 / NBRC 15155 / AMRC-C165</strain>
    </source>
</reference>
<organism>
    <name type="scientific">Thermoplasma acidophilum (strain ATCC 25905 / DSM 1728 / JCM 9062 / NBRC 15155 / AMRC-C165)</name>
    <dbReference type="NCBI Taxonomy" id="273075"/>
    <lineage>
        <taxon>Archaea</taxon>
        <taxon>Methanobacteriati</taxon>
        <taxon>Thermoplasmatota</taxon>
        <taxon>Thermoplasmata</taxon>
        <taxon>Thermoplasmatales</taxon>
        <taxon>Thermoplasmataceae</taxon>
        <taxon>Thermoplasma</taxon>
    </lineage>
</organism>
<sequence>MLNIIGVGLRGTGSITFDEFDALRTSDFVYADMYTSIGQPGLIRKISAMIDRDILPLTRDEIENGSILPQAASKNVSLIVVGDPLMATTHNELRYEAMNQGIGVRIFENASILNAAIGKAGLMVYKVAPPVSLPRISEKFFPLSVIDKIKRNADLGLHTPVLIDLEDQENIPLHDALASLLEMERRREYSGIIREICVLSRISFPDEKILFGRIEDMMQQEVNSPYMMFILSKLDDNERRFLSLFSESVSKVSDARS</sequence>
<proteinExistence type="inferred from homology"/>
<protein>
    <recommendedName>
        <fullName evidence="1">Diphthine synthase</fullName>
        <ecNumber evidence="1">2.1.1.98</ecNumber>
    </recommendedName>
    <alternativeName>
        <fullName evidence="1">Diphthamide biosynthesis methyltransferase</fullName>
    </alternativeName>
</protein>
<evidence type="ECO:0000255" key="1">
    <source>
        <dbReference type="HAMAP-Rule" id="MF_01084"/>
    </source>
</evidence>
<feature type="chain" id="PRO_0000156130" description="Diphthine synthase">
    <location>
        <begin position="1"/>
        <end position="257"/>
    </location>
</feature>
<feature type="binding site" evidence="1">
    <location>
        <position position="9"/>
    </location>
    <ligand>
        <name>S-adenosyl-L-methionine</name>
        <dbReference type="ChEBI" id="CHEBI:59789"/>
    </ligand>
</feature>
<feature type="binding site" evidence="1">
    <location>
        <position position="83"/>
    </location>
    <ligand>
        <name>S-adenosyl-L-methionine</name>
        <dbReference type="ChEBI" id="CHEBI:59789"/>
    </ligand>
</feature>
<feature type="binding site" evidence="1">
    <location>
        <position position="86"/>
    </location>
    <ligand>
        <name>S-adenosyl-L-methionine</name>
        <dbReference type="ChEBI" id="CHEBI:59789"/>
    </ligand>
</feature>
<feature type="binding site" evidence="1">
    <location>
        <begin position="111"/>
        <end position="112"/>
    </location>
    <ligand>
        <name>S-adenosyl-L-methionine</name>
        <dbReference type="ChEBI" id="CHEBI:59789"/>
    </ligand>
</feature>
<feature type="binding site" evidence="1">
    <location>
        <position position="163"/>
    </location>
    <ligand>
        <name>S-adenosyl-L-methionine</name>
        <dbReference type="ChEBI" id="CHEBI:59789"/>
    </ligand>
</feature>
<dbReference type="EC" id="2.1.1.98" evidence="1"/>
<dbReference type="EMBL" id="AL445065">
    <property type="protein sequence ID" value="CAC12012.1"/>
    <property type="molecule type" value="Genomic_DNA"/>
</dbReference>
<dbReference type="RefSeq" id="WP_010901293.1">
    <property type="nucleotide sequence ID" value="NC_002578.1"/>
</dbReference>
<dbReference type="SMR" id="Q9HJT0"/>
<dbReference type="FunCoup" id="Q9HJT0">
    <property type="interactions" value="162"/>
</dbReference>
<dbReference type="STRING" id="273075.gene:9572097"/>
<dbReference type="PaxDb" id="273075-Ta0883"/>
<dbReference type="EnsemblBacteria" id="CAC12012">
    <property type="protein sequence ID" value="CAC12012"/>
    <property type="gene ID" value="CAC12012"/>
</dbReference>
<dbReference type="KEGG" id="tac:Ta0883"/>
<dbReference type="eggNOG" id="arCOG04161">
    <property type="taxonomic scope" value="Archaea"/>
</dbReference>
<dbReference type="HOGENOM" id="CLU_066040_0_1_2"/>
<dbReference type="InParanoid" id="Q9HJT0"/>
<dbReference type="OrthoDB" id="39139at2157"/>
<dbReference type="UniPathway" id="UPA00559"/>
<dbReference type="Proteomes" id="UP000001024">
    <property type="component" value="Chromosome"/>
</dbReference>
<dbReference type="GO" id="GO:0004164">
    <property type="term" value="F:diphthine synthase activity"/>
    <property type="evidence" value="ECO:0007669"/>
    <property type="project" value="UniProtKB-UniRule"/>
</dbReference>
<dbReference type="GO" id="GO:0032259">
    <property type="term" value="P:methylation"/>
    <property type="evidence" value="ECO:0007669"/>
    <property type="project" value="UniProtKB-KW"/>
</dbReference>
<dbReference type="GO" id="GO:0017183">
    <property type="term" value="P:protein histidyl modification to diphthamide"/>
    <property type="evidence" value="ECO:0007669"/>
    <property type="project" value="UniProtKB-UniRule"/>
</dbReference>
<dbReference type="CDD" id="cd11647">
    <property type="entry name" value="DHP5_DphB"/>
    <property type="match status" value="1"/>
</dbReference>
<dbReference type="Gene3D" id="3.40.1010.10">
    <property type="entry name" value="Cobalt-precorrin-4 Transmethylase, Domain 1"/>
    <property type="match status" value="1"/>
</dbReference>
<dbReference type="Gene3D" id="3.30.950.10">
    <property type="entry name" value="Methyltransferase, Cobalt-precorrin-4 Transmethylase, Domain 2"/>
    <property type="match status" value="1"/>
</dbReference>
<dbReference type="HAMAP" id="MF_01084">
    <property type="entry name" value="Diphthine_synth"/>
    <property type="match status" value="1"/>
</dbReference>
<dbReference type="InterPro" id="IPR000878">
    <property type="entry name" value="4pyrrol_Mease"/>
</dbReference>
<dbReference type="InterPro" id="IPR035996">
    <property type="entry name" value="4pyrrol_Methylase_sf"/>
</dbReference>
<dbReference type="InterPro" id="IPR014777">
    <property type="entry name" value="4pyrrole_Mease_sub1"/>
</dbReference>
<dbReference type="InterPro" id="IPR014776">
    <property type="entry name" value="4pyrrole_Mease_sub2"/>
</dbReference>
<dbReference type="InterPro" id="IPR004551">
    <property type="entry name" value="Dphthn_synthase"/>
</dbReference>
<dbReference type="NCBIfam" id="TIGR00522">
    <property type="entry name" value="dph5"/>
    <property type="match status" value="1"/>
</dbReference>
<dbReference type="PANTHER" id="PTHR10882:SF0">
    <property type="entry name" value="DIPHTHINE METHYL ESTER SYNTHASE"/>
    <property type="match status" value="1"/>
</dbReference>
<dbReference type="PANTHER" id="PTHR10882">
    <property type="entry name" value="DIPHTHINE SYNTHASE"/>
    <property type="match status" value="1"/>
</dbReference>
<dbReference type="Pfam" id="PF00590">
    <property type="entry name" value="TP_methylase"/>
    <property type="match status" value="1"/>
</dbReference>
<dbReference type="PIRSF" id="PIRSF036432">
    <property type="entry name" value="Diphthine_synth"/>
    <property type="match status" value="1"/>
</dbReference>
<dbReference type="SUPFAM" id="SSF53790">
    <property type="entry name" value="Tetrapyrrole methylase"/>
    <property type="match status" value="1"/>
</dbReference>
<comment type="function">
    <text evidence="1">S-adenosyl-L-methionine-dependent methyltransferase that catalyzes the trimethylation of the amino group of the modified target histidine residue in translation elongation factor 2 (EF-2), to form an intermediate called diphthine. The three successive methylation reactions represent the second step of diphthamide biosynthesis.</text>
</comment>
<comment type="catalytic activity">
    <reaction evidence="1">
        <text>2-[(3S)-amino-3-carboxypropyl]-L-histidyl-[translation elongation factor 2] + 3 S-adenosyl-L-methionine = diphthine-[translation elongation factor 2] + 3 S-adenosyl-L-homocysteine + 3 H(+)</text>
        <dbReference type="Rhea" id="RHEA:36415"/>
        <dbReference type="Rhea" id="RHEA-COMP:9749"/>
        <dbReference type="Rhea" id="RHEA-COMP:10172"/>
        <dbReference type="ChEBI" id="CHEBI:15378"/>
        <dbReference type="ChEBI" id="CHEBI:57856"/>
        <dbReference type="ChEBI" id="CHEBI:59789"/>
        <dbReference type="ChEBI" id="CHEBI:73995"/>
        <dbReference type="ChEBI" id="CHEBI:82696"/>
        <dbReference type="EC" id="2.1.1.98"/>
    </reaction>
</comment>
<comment type="pathway">
    <text evidence="1">Protein modification; peptidyl-diphthamide biosynthesis.</text>
</comment>
<comment type="subunit">
    <text evidence="1">Homodimer.</text>
</comment>
<comment type="similarity">
    <text evidence="1">Belongs to the diphthine synthase family.</text>
</comment>
<keyword id="KW-0489">Methyltransferase</keyword>
<keyword id="KW-1185">Reference proteome</keyword>
<keyword id="KW-0949">S-adenosyl-L-methionine</keyword>
<keyword id="KW-0808">Transferase</keyword>